<sequence length="128" mass="15541">MTRIKRGYIARRRRTKIRLFASSFRGAHSRLTRTITQQKIRALVSAHRDRDRKKRDFRRLWITRINAVIRERGVSYSYSRLIHDLYKRQLLLNRKILAQIAISNRNCLYMISNEIIKEVDWKESTRII</sequence>
<protein>
    <recommendedName>
        <fullName evidence="1">Large ribosomal subunit protein bL20c</fullName>
    </recommendedName>
    <alternativeName>
        <fullName evidence="2">50S ribosomal protein L20, chloroplastic</fullName>
    </alternativeName>
</protein>
<accession>Q7FNS5</accession>
<evidence type="ECO:0000255" key="1">
    <source>
        <dbReference type="HAMAP-Rule" id="MF_00382"/>
    </source>
</evidence>
<evidence type="ECO:0000305" key="2"/>
<dbReference type="EMBL" id="AJ316582">
    <property type="protein sequence ID" value="CAC88067.1"/>
    <property type="molecule type" value="Genomic_DNA"/>
</dbReference>
<dbReference type="RefSeq" id="NP_783255.1">
    <property type="nucleotide sequence ID" value="NC_004561.1"/>
</dbReference>
<dbReference type="SMR" id="Q7FNS5"/>
<dbReference type="GeneID" id="806497"/>
<dbReference type="GO" id="GO:0009507">
    <property type="term" value="C:chloroplast"/>
    <property type="evidence" value="ECO:0007669"/>
    <property type="project" value="UniProtKB-SubCell"/>
</dbReference>
<dbReference type="GO" id="GO:1990904">
    <property type="term" value="C:ribonucleoprotein complex"/>
    <property type="evidence" value="ECO:0007669"/>
    <property type="project" value="UniProtKB-KW"/>
</dbReference>
<dbReference type="GO" id="GO:0005840">
    <property type="term" value="C:ribosome"/>
    <property type="evidence" value="ECO:0007669"/>
    <property type="project" value="UniProtKB-KW"/>
</dbReference>
<dbReference type="GO" id="GO:0019843">
    <property type="term" value="F:rRNA binding"/>
    <property type="evidence" value="ECO:0007669"/>
    <property type="project" value="UniProtKB-UniRule"/>
</dbReference>
<dbReference type="GO" id="GO:0003735">
    <property type="term" value="F:structural constituent of ribosome"/>
    <property type="evidence" value="ECO:0007669"/>
    <property type="project" value="InterPro"/>
</dbReference>
<dbReference type="GO" id="GO:0000027">
    <property type="term" value="P:ribosomal large subunit assembly"/>
    <property type="evidence" value="ECO:0007669"/>
    <property type="project" value="UniProtKB-UniRule"/>
</dbReference>
<dbReference type="GO" id="GO:0006412">
    <property type="term" value="P:translation"/>
    <property type="evidence" value="ECO:0007669"/>
    <property type="project" value="InterPro"/>
</dbReference>
<dbReference type="CDD" id="cd07026">
    <property type="entry name" value="Ribosomal_L20"/>
    <property type="match status" value="1"/>
</dbReference>
<dbReference type="FunFam" id="1.10.1900.20:FF:000001">
    <property type="entry name" value="50S ribosomal protein L20"/>
    <property type="match status" value="1"/>
</dbReference>
<dbReference type="Gene3D" id="6.10.160.10">
    <property type="match status" value="1"/>
</dbReference>
<dbReference type="Gene3D" id="1.10.1900.20">
    <property type="entry name" value="Ribosomal protein L20"/>
    <property type="match status" value="1"/>
</dbReference>
<dbReference type="HAMAP" id="MF_00382">
    <property type="entry name" value="Ribosomal_bL20"/>
    <property type="match status" value="1"/>
</dbReference>
<dbReference type="InterPro" id="IPR005813">
    <property type="entry name" value="Ribosomal_bL20"/>
</dbReference>
<dbReference type="InterPro" id="IPR049946">
    <property type="entry name" value="RIBOSOMAL_L20_CS"/>
</dbReference>
<dbReference type="InterPro" id="IPR035566">
    <property type="entry name" value="Ribosomal_protein_bL20_C"/>
</dbReference>
<dbReference type="NCBIfam" id="TIGR01032">
    <property type="entry name" value="rplT_bact"/>
    <property type="match status" value="1"/>
</dbReference>
<dbReference type="PANTHER" id="PTHR10986">
    <property type="entry name" value="39S RIBOSOMAL PROTEIN L20"/>
    <property type="match status" value="1"/>
</dbReference>
<dbReference type="Pfam" id="PF00453">
    <property type="entry name" value="Ribosomal_L20"/>
    <property type="match status" value="1"/>
</dbReference>
<dbReference type="PRINTS" id="PR00062">
    <property type="entry name" value="RIBOSOMALL20"/>
</dbReference>
<dbReference type="SUPFAM" id="SSF74731">
    <property type="entry name" value="Ribosomal protein L20"/>
    <property type="match status" value="1"/>
</dbReference>
<dbReference type="PROSITE" id="PS00937">
    <property type="entry name" value="RIBOSOMAL_L20"/>
    <property type="match status" value="1"/>
</dbReference>
<keyword id="KW-0150">Chloroplast</keyword>
<keyword id="KW-0934">Plastid</keyword>
<keyword id="KW-0687">Ribonucleoprotein</keyword>
<keyword id="KW-0689">Ribosomal protein</keyword>
<keyword id="KW-0694">RNA-binding</keyword>
<keyword id="KW-0699">rRNA-binding</keyword>
<gene>
    <name evidence="1" type="primary">rpl20</name>
</gene>
<proteinExistence type="inferred from homology"/>
<name>RK20_ATRBE</name>
<organism>
    <name type="scientific">Atropa belladonna</name>
    <name type="common">Belladonna</name>
    <name type="synonym">Deadly nightshade</name>
    <dbReference type="NCBI Taxonomy" id="33113"/>
    <lineage>
        <taxon>Eukaryota</taxon>
        <taxon>Viridiplantae</taxon>
        <taxon>Streptophyta</taxon>
        <taxon>Embryophyta</taxon>
        <taxon>Tracheophyta</taxon>
        <taxon>Spermatophyta</taxon>
        <taxon>Magnoliopsida</taxon>
        <taxon>eudicotyledons</taxon>
        <taxon>Gunneridae</taxon>
        <taxon>Pentapetalae</taxon>
        <taxon>asterids</taxon>
        <taxon>lamiids</taxon>
        <taxon>Solanales</taxon>
        <taxon>Solanaceae</taxon>
        <taxon>Solanoideae</taxon>
        <taxon>Hyoscyameae</taxon>
        <taxon>Atropa</taxon>
    </lineage>
</organism>
<comment type="function">
    <text evidence="1">Binds directly to 23S ribosomal RNA and is necessary for the in vitro assembly process of the 50S ribosomal subunit. It is not involved in the protein synthesizing functions of that subunit.</text>
</comment>
<comment type="subcellular location">
    <subcellularLocation>
        <location>Plastid</location>
        <location>Chloroplast</location>
    </subcellularLocation>
</comment>
<comment type="similarity">
    <text evidence="1">Belongs to the bacterial ribosomal protein bL20 family.</text>
</comment>
<feature type="chain" id="PRO_0000177280" description="Large ribosomal subunit protein bL20c">
    <location>
        <begin position="1"/>
        <end position="128"/>
    </location>
</feature>
<geneLocation type="chloroplast"/>
<reference key="1">
    <citation type="journal article" date="2002" name="Mol. Biol. Evol.">
        <title>The plastid chromosome of Atropa belladonna and its comparison with that of Nicotiana tabacum: the role of RNA editing in generating divergence in the process of plant speciation.</title>
        <authorList>
            <person name="Schmitz-Linneweber C."/>
            <person name="Regel R."/>
            <person name="Du T.G."/>
            <person name="Hupfer H."/>
            <person name="Herrmann R.G."/>
            <person name="Maier R.M."/>
        </authorList>
    </citation>
    <scope>NUCLEOTIDE SEQUENCE [LARGE SCALE GENOMIC DNA]</scope>
    <source>
        <strain>cv. Ab5p(kan)</strain>
    </source>
</reference>